<accession>P61529</accession>
<keyword id="KW-0067">ATP-binding</keyword>
<keyword id="KW-0963">Cytoplasm</keyword>
<keyword id="KW-0227">DNA damage</keyword>
<keyword id="KW-0233">DNA recombination</keyword>
<keyword id="KW-0234">DNA repair</keyword>
<keyword id="KW-0238">DNA-binding</keyword>
<keyword id="KW-0378">Hydrolase</keyword>
<keyword id="KW-0547">Nucleotide-binding</keyword>
<keyword id="KW-1185">Reference proteome</keyword>
<comment type="function">
    <text evidence="1">The RuvA-RuvB-RuvC complex processes Holliday junction (HJ) DNA during genetic recombination and DNA repair, while the RuvA-RuvB complex plays an important role in the rescue of blocked DNA replication forks via replication fork reversal (RFR). RuvA specifically binds to HJ cruciform DNA, conferring on it an open structure. The RuvB hexamer acts as an ATP-dependent pump, pulling dsDNA into and through the RuvAB complex. RuvB forms 2 homohexamers on either side of HJ DNA bound by 1 or 2 RuvA tetramers; 4 subunits per hexamer contact DNA at a time. Coordinated motions by a converter formed by DNA-disengaged RuvB subunits stimulates ATP hydrolysis and nucleotide exchange. Immobilization of the converter enables RuvB to convert the ATP-contained energy into a lever motion, pulling 2 nucleotides of DNA out of the RuvA tetramer per ATP hydrolyzed, thus driving DNA branch migration. The RuvB motors rotate together with the DNA substrate, which together with the progressing nucleotide cycle form the mechanistic basis for DNA recombination by continuous HJ branch migration. Branch migration allows RuvC to scan DNA until it finds its consensus sequence, where it cleaves and resolves cruciform DNA.</text>
</comment>
<comment type="catalytic activity">
    <reaction evidence="1">
        <text>ATP + H2O = ADP + phosphate + H(+)</text>
        <dbReference type="Rhea" id="RHEA:13065"/>
        <dbReference type="ChEBI" id="CHEBI:15377"/>
        <dbReference type="ChEBI" id="CHEBI:15378"/>
        <dbReference type="ChEBI" id="CHEBI:30616"/>
        <dbReference type="ChEBI" id="CHEBI:43474"/>
        <dbReference type="ChEBI" id="CHEBI:456216"/>
    </reaction>
</comment>
<comment type="subunit">
    <text evidence="1">Homohexamer. Forms an RuvA(8)-RuvB(12)-Holliday junction (HJ) complex. HJ DNA is sandwiched between 2 RuvA tetramers; dsDNA enters through RuvA and exits via RuvB. An RuvB hexamer assembles on each DNA strand where it exits the tetramer. Each RuvB hexamer is contacted by two RuvA subunits (via domain III) on 2 adjacent RuvB subunits; this complex drives branch migration. In the full resolvosome a probable DNA-RuvA(4)-RuvB(12)-RuvC(2) complex forms which resolves the HJ.</text>
</comment>
<comment type="subcellular location">
    <subcellularLocation>
        <location evidence="1">Cytoplasm</location>
    </subcellularLocation>
</comment>
<comment type="domain">
    <text evidence="1">Has 3 domains, the large (RuvB-L) and small ATPase (RuvB-S) domains and the C-terminal head (RuvB-H) domain. The head domain binds DNA, while the ATPase domains jointly bind ATP, ADP or are empty depending on the state of the subunit in the translocation cycle. During a single DNA translocation step the structure of each domain remains the same, but their relative positions change.</text>
</comment>
<comment type="similarity">
    <text evidence="1">Belongs to the RuvB family.</text>
</comment>
<organism>
    <name type="scientific">Bdellovibrio bacteriovorus (strain ATCC 15356 / DSM 50701 / NCIMB 9529 / HD100)</name>
    <dbReference type="NCBI Taxonomy" id="264462"/>
    <lineage>
        <taxon>Bacteria</taxon>
        <taxon>Pseudomonadati</taxon>
        <taxon>Bdellovibrionota</taxon>
        <taxon>Bdellovibrionia</taxon>
        <taxon>Bdellovibrionales</taxon>
        <taxon>Pseudobdellovibrionaceae</taxon>
        <taxon>Bdellovibrio</taxon>
    </lineage>
</organism>
<sequence>MSRILEGDPVEGEKSWENELRPQKFEDFPGQDDVKEKLKVFVAAAKHRGESLDHVLLCGPPGLGKTTLSKIIANDMGAEIKMTSAPAIDKKGDLAAILTSLKPHSVLFIDEIHRLSRHVEEYLYTAMEDYYIDIVTGEGLGARSMKFTLAPFTLVGATTRAGLLNPPFRDRFGIVERLQFYDKDALRQILMRSAEILKVEIDEEGAEEVARRSRGTPRVANRLLKRVRDYAQVKGNGVVSKDIAVYALNQLGVDQYGLDLMDRRILSLIQDKYAGGPVGIDTIAAALSEERDTLEEVYEPFLIQEGFIQKTQRGRVITEFAKSSVLADK</sequence>
<evidence type="ECO:0000255" key="1">
    <source>
        <dbReference type="HAMAP-Rule" id="MF_00016"/>
    </source>
</evidence>
<evidence type="ECO:0000256" key="2">
    <source>
        <dbReference type="SAM" id="MobiDB-lite"/>
    </source>
</evidence>
<proteinExistence type="inferred from homology"/>
<name>RUVB_BDEBA</name>
<feature type="chain" id="PRO_0000165497" description="Holliday junction branch migration complex subunit RuvB">
    <location>
        <begin position="1"/>
        <end position="329"/>
    </location>
</feature>
<feature type="region of interest" description="Large ATPase domain (RuvB-L)" evidence="1">
    <location>
        <begin position="1"/>
        <end position="181"/>
    </location>
</feature>
<feature type="region of interest" description="Disordered" evidence="2">
    <location>
        <begin position="1"/>
        <end position="20"/>
    </location>
</feature>
<feature type="region of interest" description="Small ATPAse domain (RuvB-S)" evidence="1">
    <location>
        <begin position="182"/>
        <end position="252"/>
    </location>
</feature>
<feature type="region of interest" description="Head domain (RuvB-H)" evidence="1">
    <location>
        <begin position="255"/>
        <end position="329"/>
    </location>
</feature>
<feature type="compositionally biased region" description="Basic and acidic residues" evidence="2">
    <location>
        <begin position="11"/>
        <end position="20"/>
    </location>
</feature>
<feature type="binding site" evidence="1">
    <location>
        <position position="20"/>
    </location>
    <ligand>
        <name>ATP</name>
        <dbReference type="ChEBI" id="CHEBI:30616"/>
    </ligand>
</feature>
<feature type="binding site" evidence="1">
    <location>
        <position position="21"/>
    </location>
    <ligand>
        <name>ATP</name>
        <dbReference type="ChEBI" id="CHEBI:30616"/>
    </ligand>
</feature>
<feature type="binding site" evidence="1">
    <location>
        <position position="62"/>
    </location>
    <ligand>
        <name>ATP</name>
        <dbReference type="ChEBI" id="CHEBI:30616"/>
    </ligand>
</feature>
<feature type="binding site" evidence="1">
    <location>
        <position position="65"/>
    </location>
    <ligand>
        <name>ATP</name>
        <dbReference type="ChEBI" id="CHEBI:30616"/>
    </ligand>
</feature>
<feature type="binding site" evidence="1">
    <location>
        <position position="66"/>
    </location>
    <ligand>
        <name>ATP</name>
        <dbReference type="ChEBI" id="CHEBI:30616"/>
    </ligand>
</feature>
<feature type="binding site" evidence="1">
    <location>
        <position position="66"/>
    </location>
    <ligand>
        <name>Mg(2+)</name>
        <dbReference type="ChEBI" id="CHEBI:18420"/>
    </ligand>
</feature>
<feature type="binding site" evidence="1">
    <location>
        <position position="67"/>
    </location>
    <ligand>
        <name>ATP</name>
        <dbReference type="ChEBI" id="CHEBI:30616"/>
    </ligand>
</feature>
<feature type="binding site" evidence="1">
    <location>
        <begin position="128"/>
        <end position="130"/>
    </location>
    <ligand>
        <name>ATP</name>
        <dbReference type="ChEBI" id="CHEBI:30616"/>
    </ligand>
</feature>
<feature type="binding site" evidence="1">
    <location>
        <position position="171"/>
    </location>
    <ligand>
        <name>ATP</name>
        <dbReference type="ChEBI" id="CHEBI:30616"/>
    </ligand>
</feature>
<feature type="binding site" evidence="1">
    <location>
        <position position="181"/>
    </location>
    <ligand>
        <name>ATP</name>
        <dbReference type="ChEBI" id="CHEBI:30616"/>
    </ligand>
</feature>
<feature type="binding site" evidence="1">
    <location>
        <position position="218"/>
    </location>
    <ligand>
        <name>ATP</name>
        <dbReference type="ChEBI" id="CHEBI:30616"/>
    </ligand>
</feature>
<feature type="binding site" evidence="1">
    <location>
        <position position="291"/>
    </location>
    <ligand>
        <name>DNA</name>
        <dbReference type="ChEBI" id="CHEBI:16991"/>
    </ligand>
</feature>
<feature type="binding site" evidence="1">
    <location>
        <position position="310"/>
    </location>
    <ligand>
        <name>DNA</name>
        <dbReference type="ChEBI" id="CHEBI:16991"/>
    </ligand>
</feature>
<feature type="binding site" evidence="1">
    <location>
        <position position="315"/>
    </location>
    <ligand>
        <name>DNA</name>
        <dbReference type="ChEBI" id="CHEBI:16991"/>
    </ligand>
</feature>
<dbReference type="EC" id="3.6.4.-" evidence="1"/>
<dbReference type="EMBL" id="BX842652">
    <property type="protein sequence ID" value="CAE80290.1"/>
    <property type="molecule type" value="Genomic_DNA"/>
</dbReference>
<dbReference type="RefSeq" id="WP_011164893.1">
    <property type="nucleotide sequence ID" value="NC_005363.1"/>
</dbReference>
<dbReference type="SMR" id="P61529"/>
<dbReference type="STRING" id="264462.Bd2487"/>
<dbReference type="GeneID" id="93013394"/>
<dbReference type="KEGG" id="bba:Bd2487"/>
<dbReference type="eggNOG" id="COG2255">
    <property type="taxonomic scope" value="Bacteria"/>
</dbReference>
<dbReference type="HOGENOM" id="CLU_055599_1_0_7"/>
<dbReference type="Proteomes" id="UP000008080">
    <property type="component" value="Chromosome"/>
</dbReference>
<dbReference type="GO" id="GO:0005737">
    <property type="term" value="C:cytoplasm"/>
    <property type="evidence" value="ECO:0007669"/>
    <property type="project" value="UniProtKB-SubCell"/>
</dbReference>
<dbReference type="GO" id="GO:0048476">
    <property type="term" value="C:Holliday junction resolvase complex"/>
    <property type="evidence" value="ECO:0007669"/>
    <property type="project" value="UniProtKB-UniRule"/>
</dbReference>
<dbReference type="GO" id="GO:0005524">
    <property type="term" value="F:ATP binding"/>
    <property type="evidence" value="ECO:0007669"/>
    <property type="project" value="UniProtKB-UniRule"/>
</dbReference>
<dbReference type="GO" id="GO:0016887">
    <property type="term" value="F:ATP hydrolysis activity"/>
    <property type="evidence" value="ECO:0007669"/>
    <property type="project" value="InterPro"/>
</dbReference>
<dbReference type="GO" id="GO:0000400">
    <property type="term" value="F:four-way junction DNA binding"/>
    <property type="evidence" value="ECO:0007669"/>
    <property type="project" value="UniProtKB-UniRule"/>
</dbReference>
<dbReference type="GO" id="GO:0009378">
    <property type="term" value="F:four-way junction helicase activity"/>
    <property type="evidence" value="ECO:0007669"/>
    <property type="project" value="InterPro"/>
</dbReference>
<dbReference type="GO" id="GO:0006310">
    <property type="term" value="P:DNA recombination"/>
    <property type="evidence" value="ECO:0007669"/>
    <property type="project" value="UniProtKB-UniRule"/>
</dbReference>
<dbReference type="GO" id="GO:0006281">
    <property type="term" value="P:DNA repair"/>
    <property type="evidence" value="ECO:0007669"/>
    <property type="project" value="UniProtKB-UniRule"/>
</dbReference>
<dbReference type="CDD" id="cd00009">
    <property type="entry name" value="AAA"/>
    <property type="match status" value="1"/>
</dbReference>
<dbReference type="Gene3D" id="1.10.8.60">
    <property type="match status" value="1"/>
</dbReference>
<dbReference type="Gene3D" id="3.40.50.300">
    <property type="entry name" value="P-loop containing nucleotide triphosphate hydrolases"/>
    <property type="match status" value="1"/>
</dbReference>
<dbReference type="Gene3D" id="1.10.10.10">
    <property type="entry name" value="Winged helix-like DNA-binding domain superfamily/Winged helix DNA-binding domain"/>
    <property type="match status" value="1"/>
</dbReference>
<dbReference type="HAMAP" id="MF_00016">
    <property type="entry name" value="DNA_HJ_migration_RuvB"/>
    <property type="match status" value="1"/>
</dbReference>
<dbReference type="InterPro" id="IPR003593">
    <property type="entry name" value="AAA+_ATPase"/>
</dbReference>
<dbReference type="InterPro" id="IPR041445">
    <property type="entry name" value="AAA_lid_4"/>
</dbReference>
<dbReference type="InterPro" id="IPR004605">
    <property type="entry name" value="DNA_helicase_Holl-junc_RuvB"/>
</dbReference>
<dbReference type="InterPro" id="IPR027417">
    <property type="entry name" value="P-loop_NTPase"/>
</dbReference>
<dbReference type="InterPro" id="IPR008824">
    <property type="entry name" value="RuvB-like_N"/>
</dbReference>
<dbReference type="InterPro" id="IPR008823">
    <property type="entry name" value="RuvB_C"/>
</dbReference>
<dbReference type="InterPro" id="IPR036388">
    <property type="entry name" value="WH-like_DNA-bd_sf"/>
</dbReference>
<dbReference type="InterPro" id="IPR036390">
    <property type="entry name" value="WH_DNA-bd_sf"/>
</dbReference>
<dbReference type="NCBIfam" id="NF000868">
    <property type="entry name" value="PRK00080.1"/>
    <property type="match status" value="1"/>
</dbReference>
<dbReference type="NCBIfam" id="TIGR00635">
    <property type="entry name" value="ruvB"/>
    <property type="match status" value="1"/>
</dbReference>
<dbReference type="PANTHER" id="PTHR42848">
    <property type="match status" value="1"/>
</dbReference>
<dbReference type="PANTHER" id="PTHR42848:SF1">
    <property type="entry name" value="HOLLIDAY JUNCTION BRANCH MIGRATION COMPLEX SUBUNIT RUVB"/>
    <property type="match status" value="1"/>
</dbReference>
<dbReference type="Pfam" id="PF17864">
    <property type="entry name" value="AAA_lid_4"/>
    <property type="match status" value="1"/>
</dbReference>
<dbReference type="Pfam" id="PF05491">
    <property type="entry name" value="RuvB_C"/>
    <property type="match status" value="1"/>
</dbReference>
<dbReference type="Pfam" id="PF05496">
    <property type="entry name" value="RuvB_N"/>
    <property type="match status" value="1"/>
</dbReference>
<dbReference type="SMART" id="SM00382">
    <property type="entry name" value="AAA"/>
    <property type="match status" value="1"/>
</dbReference>
<dbReference type="SUPFAM" id="SSF52540">
    <property type="entry name" value="P-loop containing nucleoside triphosphate hydrolases"/>
    <property type="match status" value="1"/>
</dbReference>
<dbReference type="SUPFAM" id="SSF46785">
    <property type="entry name" value="Winged helix' DNA-binding domain"/>
    <property type="match status" value="1"/>
</dbReference>
<reference key="1">
    <citation type="journal article" date="2004" name="Science">
        <title>A predator unmasked: life cycle of Bdellovibrio bacteriovorus from a genomic perspective.</title>
        <authorList>
            <person name="Rendulic S."/>
            <person name="Jagtap P."/>
            <person name="Rosinus A."/>
            <person name="Eppinger M."/>
            <person name="Baar C."/>
            <person name="Lanz C."/>
            <person name="Keller H."/>
            <person name="Lambert C."/>
            <person name="Evans K.J."/>
            <person name="Goesmann A."/>
            <person name="Meyer F."/>
            <person name="Sockett R.E."/>
            <person name="Schuster S.C."/>
        </authorList>
    </citation>
    <scope>NUCLEOTIDE SEQUENCE [LARGE SCALE GENOMIC DNA]</scope>
    <source>
        <strain>ATCC 15356 / DSM 50701 / NCIMB 9529 / HD100</strain>
    </source>
</reference>
<protein>
    <recommendedName>
        <fullName evidence="1">Holliday junction branch migration complex subunit RuvB</fullName>
        <ecNumber evidence="1">3.6.4.-</ecNumber>
    </recommendedName>
</protein>
<gene>
    <name evidence="1" type="primary">ruvB</name>
    <name type="ordered locus">Bd2487</name>
</gene>